<feature type="chain" id="PRO_0000190996" description="Translocator protein">
    <location>
        <begin position="1"/>
        <end position="169"/>
    </location>
</feature>
<feature type="topological domain" description="Mitochondrial intermembrane" evidence="1">
    <location>
        <begin position="1"/>
        <end position="5"/>
    </location>
</feature>
<feature type="transmembrane region" description="Helical; Name=1" evidence="1">
    <location>
        <begin position="6"/>
        <end position="26"/>
    </location>
</feature>
<feature type="topological domain" description="Cytoplasmic" evidence="1">
    <location>
        <begin position="27"/>
        <end position="46"/>
    </location>
</feature>
<feature type="transmembrane region" description="Helical; Name=2" evidence="1">
    <location>
        <begin position="47"/>
        <end position="67"/>
    </location>
</feature>
<feature type="topological domain" description="Mitochondrial intermembrane" evidence="1">
    <location>
        <begin position="68"/>
        <end position="79"/>
    </location>
</feature>
<feature type="transmembrane region" description="Helical; Name=3" evidence="1">
    <location>
        <begin position="80"/>
        <end position="100"/>
    </location>
</feature>
<feature type="topological domain" description="Cytoplasmic" evidence="1">
    <location>
        <begin position="101"/>
        <end position="105"/>
    </location>
</feature>
<feature type="transmembrane region" description="Helical; Name=4" evidence="1">
    <location>
        <begin position="106"/>
        <end position="126"/>
    </location>
</feature>
<feature type="topological domain" description="Mitochondrial intermembrane" evidence="1">
    <location>
        <begin position="127"/>
        <end position="134"/>
    </location>
</feature>
<feature type="transmembrane region" description="Helical; Name=5" evidence="1">
    <location>
        <begin position="135"/>
        <end position="155"/>
    </location>
</feature>
<feature type="topological domain" description="Cytoplasmic" evidence="1">
    <location>
        <begin position="156"/>
        <end position="169"/>
    </location>
</feature>
<feature type="sequence conflict" description="In Ref. 2; AAI02934." evidence="3" ref="2">
    <original>GM</original>
    <variation>AT</variation>
    <location>
        <begin position="148"/>
        <end position="149"/>
    </location>
</feature>
<organism>
    <name type="scientific">Bos taurus</name>
    <name type="common">Bovine</name>
    <dbReference type="NCBI Taxonomy" id="9913"/>
    <lineage>
        <taxon>Eukaryota</taxon>
        <taxon>Metazoa</taxon>
        <taxon>Chordata</taxon>
        <taxon>Craniata</taxon>
        <taxon>Vertebrata</taxon>
        <taxon>Euteleostomi</taxon>
        <taxon>Mammalia</taxon>
        <taxon>Eutheria</taxon>
        <taxon>Laurasiatheria</taxon>
        <taxon>Artiodactyla</taxon>
        <taxon>Ruminantia</taxon>
        <taxon>Pecora</taxon>
        <taxon>Bovidae</taxon>
        <taxon>Bovinae</taxon>
        <taxon>Bos</taxon>
    </lineage>
</organism>
<sequence length="169" mass="18927">MAPPWVPAVGFTLLPSLGGFLGAQYTRGEGFRWYASLQKPPWHPPRWILAPIWGTLYSAMGYGSYMIWKELGGFSKEAVVPLGLYAGQLALNWAWPPLFFGTRQMGWALVDLLLTGGMAAATAMAWHQVSPPAACLLYPYLAWLAFAGMLNYRMWQDNQVRRSGRRLSE</sequence>
<keyword id="KW-0445">Lipid transport</keyword>
<keyword id="KW-0472">Membrane</keyword>
<keyword id="KW-0496">Mitochondrion</keyword>
<keyword id="KW-0675">Receptor</keyword>
<keyword id="KW-1185">Reference proteome</keyword>
<keyword id="KW-0812">Transmembrane</keyword>
<keyword id="KW-1133">Transmembrane helix</keyword>
<keyword id="KW-0813">Transport</keyword>
<name>TSPO_BOVIN</name>
<reference key="1">
    <citation type="journal article" date="1991" name="J. Biol. Chem.">
        <title>Cloning and expression of a pharmacologically unique bovine peripheral-type benzodiazepine receptor isoquinoline binding protein.</title>
        <authorList>
            <person name="Parola A.L."/>
            <person name="Stump D.G."/>
            <person name="Pepperl D.J."/>
            <person name="Krueger K.E."/>
            <person name="Regan J.W."/>
            <person name="Laird H.E. II"/>
        </authorList>
    </citation>
    <scope>NUCLEOTIDE SEQUENCE [MRNA]</scope>
    <scope>FUNCTION</scope>
    <scope>SUBCELLULAR LOCATION</scope>
</reference>
<reference key="2">
    <citation type="submission" date="2005-08" db="EMBL/GenBank/DDBJ databases">
        <authorList>
            <consortium name="NIH - Mammalian Gene Collection (MGC) project"/>
        </authorList>
    </citation>
    <scope>NUCLEOTIDE SEQUENCE [LARGE SCALE MRNA]</scope>
    <source>
        <strain>Hereford</strain>
        <tissue>Fetal liver</tissue>
    </source>
</reference>
<dbReference type="EMBL" id="M64520">
    <property type="protein sequence ID" value="AAA30686.1"/>
    <property type="molecule type" value="mRNA"/>
</dbReference>
<dbReference type="EMBL" id="BC102933">
    <property type="protein sequence ID" value="AAI02934.1"/>
    <property type="molecule type" value="mRNA"/>
</dbReference>
<dbReference type="PIR" id="A39473">
    <property type="entry name" value="A39473"/>
</dbReference>
<dbReference type="RefSeq" id="NP_786970.1">
    <property type="nucleotide sequence ID" value="NM_175776.2"/>
</dbReference>
<dbReference type="SMR" id="P30535"/>
<dbReference type="FunCoup" id="P30535">
    <property type="interactions" value="253"/>
</dbReference>
<dbReference type="STRING" id="9913.ENSBTAP00000066530"/>
<dbReference type="BindingDB" id="P30535"/>
<dbReference type="ChEMBL" id="CHEMBL2419"/>
<dbReference type="PaxDb" id="9913-ENSBTAP00000024060"/>
<dbReference type="GeneID" id="281033"/>
<dbReference type="KEGG" id="bta:281033"/>
<dbReference type="CTD" id="706"/>
<dbReference type="eggNOG" id="KOG3797">
    <property type="taxonomic scope" value="Eukaryota"/>
</dbReference>
<dbReference type="HOGENOM" id="CLU_091805_2_1_1"/>
<dbReference type="InParanoid" id="P30535"/>
<dbReference type="OrthoDB" id="8841220at2759"/>
<dbReference type="TreeFam" id="TF342852"/>
<dbReference type="Proteomes" id="UP000009136">
    <property type="component" value="Unplaced"/>
</dbReference>
<dbReference type="GO" id="GO:0016020">
    <property type="term" value="C:membrane"/>
    <property type="evidence" value="ECO:0000318"/>
    <property type="project" value="GO_Central"/>
</dbReference>
<dbReference type="GO" id="GO:0031966">
    <property type="term" value="C:mitochondrial membrane"/>
    <property type="evidence" value="ECO:0007669"/>
    <property type="project" value="UniProtKB-SubCell"/>
</dbReference>
<dbReference type="GO" id="GO:0006869">
    <property type="term" value="P:lipid transport"/>
    <property type="evidence" value="ECO:0007669"/>
    <property type="project" value="UniProtKB-KW"/>
</dbReference>
<dbReference type="CDD" id="cd15904">
    <property type="entry name" value="TSPO_MBR"/>
    <property type="match status" value="1"/>
</dbReference>
<dbReference type="FunFam" id="1.20.1260.100:FF:000001">
    <property type="entry name" value="translocator protein 2"/>
    <property type="match status" value="1"/>
</dbReference>
<dbReference type="Gene3D" id="1.20.1260.100">
    <property type="entry name" value="TspO/MBR protein"/>
    <property type="match status" value="1"/>
</dbReference>
<dbReference type="InterPro" id="IPR038330">
    <property type="entry name" value="TspO/MBR-related_sf"/>
</dbReference>
<dbReference type="InterPro" id="IPR004307">
    <property type="entry name" value="TspO_MBR"/>
</dbReference>
<dbReference type="PANTHER" id="PTHR10057">
    <property type="entry name" value="PERIPHERAL-TYPE BENZODIAZEPINE RECEPTOR"/>
    <property type="match status" value="1"/>
</dbReference>
<dbReference type="PANTHER" id="PTHR10057:SF5">
    <property type="entry name" value="TRANSLOCATOR PROTEIN"/>
    <property type="match status" value="1"/>
</dbReference>
<dbReference type="Pfam" id="PF03073">
    <property type="entry name" value="TspO_MBR"/>
    <property type="match status" value="1"/>
</dbReference>
<dbReference type="PIRSF" id="PIRSF005859">
    <property type="entry name" value="PBR"/>
    <property type="match status" value="1"/>
</dbReference>
<evidence type="ECO:0000250" key="1"/>
<evidence type="ECO:0000269" key="2">
    <source>
    </source>
</evidence>
<evidence type="ECO:0000305" key="3"/>
<accession>P30535</accession>
<accession>Q3ZC36</accession>
<gene>
    <name type="primary">TSPO</name>
    <name type="synonym">BZRP</name>
</gene>
<proteinExistence type="evidence at transcript level"/>
<comment type="function">
    <text evidence="1 2">Promotes the transport of cholesterol across mitochondrial membranes and may play a role in lipid metabolism, but its precise physiological role is controversial. It is apparently not required for steroid hormone biosynthesis. Can bind protoporphyrin IX and may play a role in the transport of porphyrins and heme (By similarity). Was initially identified as peripheral-type benzodiazepine receptor; can also bind isoquinoline carboxamides (PubMed:1649835).</text>
</comment>
<comment type="subunit">
    <text evidence="1">Interacts with TSPOAP1. Interacts with MOST-1. May interact with STAR.</text>
</comment>
<comment type="subcellular location">
    <subcellularLocation>
        <location evidence="1">Mitochondrion membrane</location>
        <topology evidence="1">Multi-pass membrane protein</topology>
    </subcellularLocation>
    <subcellularLocation>
        <location evidence="2">Membrane</location>
        <topology evidence="2">Multi-pass membrane protein</topology>
    </subcellularLocation>
</comment>
<comment type="similarity">
    <text evidence="3">Belongs to the TspO/BZRP family.</text>
</comment>
<protein>
    <recommendedName>
        <fullName>Translocator protein</fullName>
    </recommendedName>
    <alternativeName>
        <fullName>Isoquinoline-binding protein</fullName>
        <shortName>IBP</shortName>
    </alternativeName>
    <alternativeName>
        <fullName>PKBS</fullName>
    </alternativeName>
    <alternativeName>
        <fullName>Peripheral-type benzodiazepine receptor</fullName>
        <shortName>PBR</shortName>
    </alternativeName>
</protein>